<feature type="chain" id="PRO_1000139653" description="UPF0229 protein YeaH">
    <location>
        <begin position="1"/>
        <end position="428"/>
    </location>
</feature>
<feature type="region of interest" description="Disordered" evidence="2">
    <location>
        <begin position="78"/>
        <end position="111"/>
    </location>
</feature>
<feature type="compositionally biased region" description="Basic and acidic residues" evidence="2">
    <location>
        <begin position="78"/>
        <end position="90"/>
    </location>
</feature>
<feature type="compositionally biased region" description="Gly residues" evidence="2">
    <location>
        <begin position="92"/>
        <end position="103"/>
    </location>
</feature>
<sequence>MTWFIDRRLNGKNKSTVNRQRFLRRYKAQIKQSISEAINKRSVTDVDSGESVSIPTDDISEPMFHQGRGGLRHRVHPGNDHFIQNDRIERPQGGGGGGSGSGQGQASQDGEGQDEFVFQISKDEYLDLLFEDLALPNLKKNQHRQLNEYKTHRAGFTSNGVPANISVVRSLQNSLARRTAMTAGKRRELHALETELETISHSEPAQLLEEERLRREIAELRAKIERVPFIDTFDLRYKNYEKRPEPSSQAVMFCLMDVSGSMDQATKDMAKRFYILLYLFLSRTYKNVEVVYIRHHTQAKEVDEHEFFYSQETGGTIVSSALKLMDEVVKERYDPGQWNIYAAQASDGDNWADDSPLCHEILAKKLLPVVRYYSYIEITRRAHQTLWREYEHLQATFDNFAMQHIRDQEDIYPVFRELFQKQSANQSV</sequence>
<organism>
    <name type="scientific">Salmonella dublin (strain CT_02021853)</name>
    <dbReference type="NCBI Taxonomy" id="439851"/>
    <lineage>
        <taxon>Bacteria</taxon>
        <taxon>Pseudomonadati</taxon>
        <taxon>Pseudomonadota</taxon>
        <taxon>Gammaproteobacteria</taxon>
        <taxon>Enterobacterales</taxon>
        <taxon>Enterobacteriaceae</taxon>
        <taxon>Salmonella</taxon>
    </lineage>
</organism>
<protein>
    <recommendedName>
        <fullName evidence="1">UPF0229 protein YeaH</fullName>
    </recommendedName>
</protein>
<dbReference type="EMBL" id="CP001144">
    <property type="protein sequence ID" value="ACH78014.1"/>
    <property type="molecule type" value="Genomic_DNA"/>
</dbReference>
<dbReference type="RefSeq" id="WP_000219715.1">
    <property type="nucleotide sequence ID" value="NC_011205.1"/>
</dbReference>
<dbReference type="SMR" id="B5FJG6"/>
<dbReference type="KEGG" id="sed:SeD_A2072"/>
<dbReference type="HOGENOM" id="CLU_049702_0_0_6"/>
<dbReference type="Proteomes" id="UP000008322">
    <property type="component" value="Chromosome"/>
</dbReference>
<dbReference type="HAMAP" id="MF_01232">
    <property type="entry name" value="UPF0229"/>
    <property type="match status" value="1"/>
</dbReference>
<dbReference type="InterPro" id="IPR006698">
    <property type="entry name" value="UPF0229"/>
</dbReference>
<dbReference type="NCBIfam" id="NF003707">
    <property type="entry name" value="PRK05325.1-2"/>
    <property type="match status" value="1"/>
</dbReference>
<dbReference type="NCBIfam" id="NF003708">
    <property type="entry name" value="PRK05325.1-3"/>
    <property type="match status" value="1"/>
</dbReference>
<dbReference type="PANTHER" id="PTHR30510">
    <property type="entry name" value="UPF0229 PROTEIN YEAH"/>
    <property type="match status" value="1"/>
</dbReference>
<dbReference type="PANTHER" id="PTHR30510:SF2">
    <property type="entry name" value="UPF0229 PROTEIN YEAH"/>
    <property type="match status" value="1"/>
</dbReference>
<dbReference type="Pfam" id="PF04285">
    <property type="entry name" value="DUF444"/>
    <property type="match status" value="1"/>
</dbReference>
<accession>B5FJG6</accession>
<reference key="1">
    <citation type="journal article" date="2011" name="J. Bacteriol.">
        <title>Comparative genomics of 28 Salmonella enterica isolates: evidence for CRISPR-mediated adaptive sublineage evolution.</title>
        <authorList>
            <person name="Fricke W.F."/>
            <person name="Mammel M.K."/>
            <person name="McDermott P.F."/>
            <person name="Tartera C."/>
            <person name="White D.G."/>
            <person name="Leclerc J.E."/>
            <person name="Ravel J."/>
            <person name="Cebula T.A."/>
        </authorList>
    </citation>
    <scope>NUCLEOTIDE SEQUENCE [LARGE SCALE GENOMIC DNA]</scope>
    <source>
        <strain>CT_02021853</strain>
    </source>
</reference>
<proteinExistence type="inferred from homology"/>
<comment type="similarity">
    <text evidence="1">Belongs to the UPF0229 family.</text>
</comment>
<gene>
    <name evidence="1" type="primary">yeaH</name>
    <name type="ordered locus">SeD_A2072</name>
</gene>
<evidence type="ECO:0000255" key="1">
    <source>
        <dbReference type="HAMAP-Rule" id="MF_01232"/>
    </source>
</evidence>
<evidence type="ECO:0000256" key="2">
    <source>
        <dbReference type="SAM" id="MobiDB-lite"/>
    </source>
</evidence>
<name>YEAH_SALDC</name>